<sequence length="305" mass="32133">MSRLAVELPGLSMKNPIMPASGCFGFGKEFAGFYDLNHLGAIAIKATTVEPRFGNPTPRVAETHSGMLNAIGLQNPGLNNVIDNELARLADVDVPIVANIAGSTVNDYVEVAEAISRVDNVHALELNISCPNVKEGGIAFGTVPDVAAQLTQEVKRVSTVPVYVKLSPNVSDIVEMAQAVERAGADGLSMINTLLGMRLDLKRRTPILANGTGGLSGPAIKPVAIRMIYQVSQAVSIPIIGMGGIQSADDVLEFMLAGADAVAVGTANFTDPYVCPTIIDELPKRMDELGIERIADIVGGSWKQS</sequence>
<organism>
    <name type="scientific">Halalkalibacterium halodurans (strain ATCC BAA-125 / DSM 18197 / FERM 7344 / JCM 9153 / C-125)</name>
    <name type="common">Bacillus halodurans</name>
    <dbReference type="NCBI Taxonomy" id="272558"/>
    <lineage>
        <taxon>Bacteria</taxon>
        <taxon>Bacillati</taxon>
        <taxon>Bacillota</taxon>
        <taxon>Bacilli</taxon>
        <taxon>Bacillales</taxon>
        <taxon>Bacillaceae</taxon>
        <taxon>Halalkalibacterium (ex Joshi et al. 2022)</taxon>
    </lineage>
</organism>
<keyword id="KW-0963">Cytoplasm</keyword>
<keyword id="KW-0285">Flavoprotein</keyword>
<keyword id="KW-0288">FMN</keyword>
<keyword id="KW-0520">NAD</keyword>
<keyword id="KW-0560">Oxidoreductase</keyword>
<keyword id="KW-0665">Pyrimidine biosynthesis</keyword>
<keyword id="KW-1185">Reference proteome</keyword>
<accession>Q9K9W1</accession>
<comment type="function">
    <text evidence="1">Catalyzes the conversion of dihydroorotate to orotate with NAD(+) as electron acceptor.</text>
</comment>
<comment type="catalytic activity">
    <reaction>
        <text>(S)-dihydroorotate + NAD(+) = orotate + NADH + H(+)</text>
        <dbReference type="Rhea" id="RHEA:13513"/>
        <dbReference type="ChEBI" id="CHEBI:15378"/>
        <dbReference type="ChEBI" id="CHEBI:30839"/>
        <dbReference type="ChEBI" id="CHEBI:30864"/>
        <dbReference type="ChEBI" id="CHEBI:57540"/>
        <dbReference type="ChEBI" id="CHEBI:57945"/>
        <dbReference type="EC" id="1.3.1.14"/>
    </reaction>
</comment>
<comment type="cofactor">
    <cofactor evidence="1">
        <name>FMN</name>
        <dbReference type="ChEBI" id="CHEBI:58210"/>
    </cofactor>
    <text evidence="1">Binds 1 FMN per subunit.</text>
</comment>
<comment type="pathway">
    <text>Pyrimidine metabolism; UMP biosynthesis via de novo pathway; orotate from (S)-dihydroorotate (NAD(+) route): step 1/1.</text>
</comment>
<comment type="subunit">
    <text evidence="1">Heterotetramer of 2 PyrK and 2 PyrD type B subunits.</text>
</comment>
<comment type="subcellular location">
    <subcellularLocation>
        <location evidence="1">Cytoplasm</location>
    </subcellularLocation>
</comment>
<comment type="similarity">
    <text evidence="2">Belongs to the dihydroorotate dehydrogenase family. Type 1 subfamily.</text>
</comment>
<feature type="chain" id="PRO_0000148388" description="Dihydroorotate dehydrogenase B (NAD(+)), catalytic subunit">
    <location>
        <begin position="1"/>
        <end position="305"/>
    </location>
</feature>
<feature type="active site" description="Nucleophile">
    <location>
        <position position="130"/>
    </location>
</feature>
<feature type="binding site" evidence="1">
    <location>
        <position position="21"/>
    </location>
    <ligand>
        <name>FMN</name>
        <dbReference type="ChEBI" id="CHEBI:58210"/>
    </ligand>
</feature>
<feature type="binding site" evidence="1">
    <location>
        <begin position="45"/>
        <end position="46"/>
    </location>
    <ligand>
        <name>FMN</name>
        <dbReference type="ChEBI" id="CHEBI:58210"/>
    </ligand>
</feature>
<feature type="binding site" evidence="1">
    <location>
        <position position="45"/>
    </location>
    <ligand>
        <name>substrate</name>
    </ligand>
</feature>
<feature type="binding site" evidence="1">
    <location>
        <begin position="69"/>
        <end position="73"/>
    </location>
    <ligand>
        <name>substrate</name>
    </ligand>
</feature>
<feature type="binding site" evidence="1">
    <location>
        <position position="99"/>
    </location>
    <ligand>
        <name>FMN</name>
        <dbReference type="ChEBI" id="CHEBI:58210"/>
    </ligand>
</feature>
<feature type="binding site" evidence="1">
    <location>
        <position position="127"/>
    </location>
    <ligand>
        <name>FMN</name>
        <dbReference type="ChEBI" id="CHEBI:58210"/>
    </ligand>
</feature>
<feature type="binding site" evidence="1">
    <location>
        <position position="127"/>
    </location>
    <ligand>
        <name>substrate</name>
    </ligand>
</feature>
<feature type="binding site" evidence="1">
    <location>
        <position position="165"/>
    </location>
    <ligand>
        <name>FMN</name>
        <dbReference type="ChEBI" id="CHEBI:58210"/>
    </ligand>
</feature>
<feature type="binding site" evidence="1">
    <location>
        <position position="191"/>
    </location>
    <ligand>
        <name>FMN</name>
        <dbReference type="ChEBI" id="CHEBI:58210"/>
    </ligand>
</feature>
<feature type="binding site" evidence="1">
    <location>
        <begin position="192"/>
        <end position="193"/>
    </location>
    <ligand>
        <name>substrate</name>
    </ligand>
</feature>
<feature type="binding site" evidence="1">
    <location>
        <position position="217"/>
    </location>
    <ligand>
        <name>FMN</name>
        <dbReference type="ChEBI" id="CHEBI:58210"/>
    </ligand>
</feature>
<feature type="binding site" evidence="1">
    <location>
        <begin position="243"/>
        <end position="244"/>
    </location>
    <ligand>
        <name>FMN</name>
        <dbReference type="ChEBI" id="CHEBI:58210"/>
    </ligand>
</feature>
<feature type="binding site" evidence="1">
    <location>
        <begin position="265"/>
        <end position="266"/>
    </location>
    <ligand>
        <name>FMN</name>
        <dbReference type="ChEBI" id="CHEBI:58210"/>
    </ligand>
</feature>
<gene>
    <name type="primary">pyrD</name>
    <name type="ordered locus">BH2534</name>
</gene>
<proteinExistence type="inferred from homology"/>
<reference key="1">
    <citation type="journal article" date="2000" name="Nucleic Acids Res.">
        <title>Complete genome sequence of the alkaliphilic bacterium Bacillus halodurans and genomic sequence comparison with Bacillus subtilis.</title>
        <authorList>
            <person name="Takami H."/>
            <person name="Nakasone K."/>
            <person name="Takaki Y."/>
            <person name="Maeno G."/>
            <person name="Sasaki R."/>
            <person name="Masui N."/>
            <person name="Fuji F."/>
            <person name="Hirama C."/>
            <person name="Nakamura Y."/>
            <person name="Ogasawara N."/>
            <person name="Kuhara S."/>
            <person name="Horikoshi K."/>
        </authorList>
    </citation>
    <scope>NUCLEOTIDE SEQUENCE [LARGE SCALE GENOMIC DNA]</scope>
    <source>
        <strain>ATCC BAA-125 / DSM 18197 / FERM 7344 / JCM 9153 / C-125</strain>
    </source>
</reference>
<protein>
    <recommendedName>
        <fullName>Dihydroorotate dehydrogenase B (NAD(+)), catalytic subunit</fullName>
        <shortName>DHOD B</shortName>
        <shortName>DHODase B</shortName>
        <shortName>DHOdehase B</shortName>
        <ecNumber>1.3.1.14</ecNumber>
    </recommendedName>
    <alternativeName>
        <fullName>Dihydroorotate oxidase B</fullName>
    </alternativeName>
    <alternativeName>
        <fullName>Orotate reductase (NADH)</fullName>
    </alternativeName>
</protein>
<name>PYRDB_HALH5</name>
<dbReference type="EC" id="1.3.1.14"/>
<dbReference type="EMBL" id="BA000004">
    <property type="protein sequence ID" value="BAB06253.1"/>
    <property type="molecule type" value="Genomic_DNA"/>
</dbReference>
<dbReference type="PIR" id="F83966">
    <property type="entry name" value="F83966"/>
</dbReference>
<dbReference type="RefSeq" id="WP_010898685.1">
    <property type="nucleotide sequence ID" value="NC_002570.2"/>
</dbReference>
<dbReference type="SMR" id="Q9K9W1"/>
<dbReference type="STRING" id="272558.gene:10728432"/>
<dbReference type="KEGG" id="bha:BH2534"/>
<dbReference type="eggNOG" id="COG0167">
    <property type="taxonomic scope" value="Bacteria"/>
</dbReference>
<dbReference type="HOGENOM" id="CLU_042042_0_0_9"/>
<dbReference type="OrthoDB" id="9794954at2"/>
<dbReference type="UniPathway" id="UPA00070">
    <property type="reaction ID" value="UER00945"/>
</dbReference>
<dbReference type="Proteomes" id="UP000001258">
    <property type="component" value="Chromosome"/>
</dbReference>
<dbReference type="GO" id="GO:0005737">
    <property type="term" value="C:cytoplasm"/>
    <property type="evidence" value="ECO:0007669"/>
    <property type="project" value="UniProtKB-SubCell"/>
</dbReference>
<dbReference type="GO" id="GO:0004589">
    <property type="term" value="F:dihydroorotate dehydrogenase (NAD+) activity"/>
    <property type="evidence" value="ECO:0007669"/>
    <property type="project" value="UniProtKB-EC"/>
</dbReference>
<dbReference type="GO" id="GO:0006207">
    <property type="term" value="P:'de novo' pyrimidine nucleobase biosynthetic process"/>
    <property type="evidence" value="ECO:0007669"/>
    <property type="project" value="InterPro"/>
</dbReference>
<dbReference type="GO" id="GO:0044205">
    <property type="term" value="P:'de novo' UMP biosynthetic process"/>
    <property type="evidence" value="ECO:0007669"/>
    <property type="project" value="UniProtKB-UniRule"/>
</dbReference>
<dbReference type="CDD" id="cd04740">
    <property type="entry name" value="DHOD_1B_like"/>
    <property type="match status" value="1"/>
</dbReference>
<dbReference type="FunFam" id="3.20.20.70:FF:000069">
    <property type="entry name" value="Dihydroorotate dehydrogenase"/>
    <property type="match status" value="1"/>
</dbReference>
<dbReference type="Gene3D" id="3.20.20.70">
    <property type="entry name" value="Aldolase class I"/>
    <property type="match status" value="1"/>
</dbReference>
<dbReference type="HAMAP" id="MF_00224">
    <property type="entry name" value="DHO_dh_type1"/>
    <property type="match status" value="1"/>
</dbReference>
<dbReference type="InterPro" id="IPR013785">
    <property type="entry name" value="Aldolase_TIM"/>
</dbReference>
<dbReference type="InterPro" id="IPR050074">
    <property type="entry name" value="DHO_dehydrogenase"/>
</dbReference>
<dbReference type="InterPro" id="IPR033888">
    <property type="entry name" value="DHOD_1B"/>
</dbReference>
<dbReference type="InterPro" id="IPR024920">
    <property type="entry name" value="Dihydroorotate_DH_1"/>
</dbReference>
<dbReference type="InterPro" id="IPR012135">
    <property type="entry name" value="Dihydroorotate_DH_1_2"/>
</dbReference>
<dbReference type="InterPro" id="IPR005720">
    <property type="entry name" value="Dihydroorotate_DH_cat"/>
</dbReference>
<dbReference type="InterPro" id="IPR001295">
    <property type="entry name" value="Dihydroorotate_DH_CS"/>
</dbReference>
<dbReference type="InterPro" id="IPR049622">
    <property type="entry name" value="Dihydroorotate_DH_I"/>
</dbReference>
<dbReference type="NCBIfam" id="NF005574">
    <property type="entry name" value="PRK07259.1"/>
    <property type="match status" value="1"/>
</dbReference>
<dbReference type="NCBIfam" id="TIGR01037">
    <property type="entry name" value="pyrD_sub1_fam"/>
    <property type="match status" value="1"/>
</dbReference>
<dbReference type="PANTHER" id="PTHR48109:SF1">
    <property type="entry name" value="DIHYDROOROTATE DEHYDROGENASE (FUMARATE)"/>
    <property type="match status" value="1"/>
</dbReference>
<dbReference type="PANTHER" id="PTHR48109">
    <property type="entry name" value="DIHYDROOROTATE DEHYDROGENASE (QUINONE), MITOCHONDRIAL-RELATED"/>
    <property type="match status" value="1"/>
</dbReference>
<dbReference type="Pfam" id="PF01180">
    <property type="entry name" value="DHO_dh"/>
    <property type="match status" value="1"/>
</dbReference>
<dbReference type="PIRSF" id="PIRSF000164">
    <property type="entry name" value="DHO_oxidase"/>
    <property type="match status" value="1"/>
</dbReference>
<dbReference type="SUPFAM" id="SSF51395">
    <property type="entry name" value="FMN-linked oxidoreductases"/>
    <property type="match status" value="1"/>
</dbReference>
<dbReference type="PROSITE" id="PS00911">
    <property type="entry name" value="DHODEHASE_1"/>
    <property type="match status" value="1"/>
</dbReference>
<dbReference type="PROSITE" id="PS00912">
    <property type="entry name" value="DHODEHASE_2"/>
    <property type="match status" value="1"/>
</dbReference>
<evidence type="ECO:0000250" key="1"/>
<evidence type="ECO:0000305" key="2"/>